<name>RRAA_ACTP7</name>
<sequence>MRIDTSALCDIYSDQVDVVEPIFSSFGGVSSFYGKITTVKCFESNGLIASVLEEEGQGRVLLIDGGGAVRRALIDTELAQLALDNGWEGIIVYGAVRQLDVLETLDIGIHALAPIPVGADDNEIGEVDTPVNFGGVTFFPEDYVYADLTGIILSPELLDLAELEE</sequence>
<dbReference type="EMBL" id="CP001091">
    <property type="protein sequence ID" value="ACE62640.1"/>
    <property type="molecule type" value="Genomic_DNA"/>
</dbReference>
<dbReference type="RefSeq" id="WP_005618345.1">
    <property type="nucleotide sequence ID" value="NC_010939.1"/>
</dbReference>
<dbReference type="SMR" id="B3H2X0"/>
<dbReference type="KEGG" id="apa:APP7_1988"/>
<dbReference type="HOGENOM" id="CLU_072626_4_0_6"/>
<dbReference type="Proteomes" id="UP000001226">
    <property type="component" value="Chromosome"/>
</dbReference>
<dbReference type="GO" id="GO:0005737">
    <property type="term" value="C:cytoplasm"/>
    <property type="evidence" value="ECO:0007669"/>
    <property type="project" value="UniProtKB-SubCell"/>
</dbReference>
<dbReference type="GO" id="GO:0060698">
    <property type="term" value="F:endoribonuclease inhibitor activity"/>
    <property type="evidence" value="ECO:0007669"/>
    <property type="project" value="UniProtKB-UniRule"/>
</dbReference>
<dbReference type="GO" id="GO:0019899">
    <property type="term" value="F:enzyme binding"/>
    <property type="evidence" value="ECO:0007669"/>
    <property type="project" value="UniProtKB-UniRule"/>
</dbReference>
<dbReference type="GO" id="GO:0051252">
    <property type="term" value="P:regulation of RNA metabolic process"/>
    <property type="evidence" value="ECO:0007669"/>
    <property type="project" value="InterPro"/>
</dbReference>
<dbReference type="CDD" id="cd16841">
    <property type="entry name" value="RraA_family"/>
    <property type="match status" value="1"/>
</dbReference>
<dbReference type="Gene3D" id="3.50.30.40">
    <property type="entry name" value="Ribonuclease E inhibitor RraA/RraA-like"/>
    <property type="match status" value="1"/>
</dbReference>
<dbReference type="HAMAP" id="MF_00471">
    <property type="entry name" value="RraA"/>
    <property type="match status" value="1"/>
</dbReference>
<dbReference type="InterPro" id="IPR010203">
    <property type="entry name" value="RraA"/>
</dbReference>
<dbReference type="InterPro" id="IPR005493">
    <property type="entry name" value="RraA/RraA-like"/>
</dbReference>
<dbReference type="InterPro" id="IPR036704">
    <property type="entry name" value="RraA/RraA-like_sf"/>
</dbReference>
<dbReference type="InterPro" id="IPR014339">
    <property type="entry name" value="RraA_gpbac"/>
</dbReference>
<dbReference type="NCBIfam" id="TIGR01935">
    <property type="entry name" value="NOT-MenG"/>
    <property type="match status" value="1"/>
</dbReference>
<dbReference type="NCBIfam" id="NF006875">
    <property type="entry name" value="PRK09372.1"/>
    <property type="match status" value="1"/>
</dbReference>
<dbReference type="NCBIfam" id="TIGR02998">
    <property type="entry name" value="RraA_entero"/>
    <property type="match status" value="1"/>
</dbReference>
<dbReference type="PANTHER" id="PTHR33254">
    <property type="entry name" value="4-HYDROXY-4-METHYL-2-OXOGLUTARATE ALDOLASE 3-RELATED"/>
    <property type="match status" value="1"/>
</dbReference>
<dbReference type="PANTHER" id="PTHR33254:SF29">
    <property type="entry name" value="REGULATOR OF RIBONUCLEASE ACTIVITY A"/>
    <property type="match status" value="1"/>
</dbReference>
<dbReference type="Pfam" id="PF03737">
    <property type="entry name" value="RraA-like"/>
    <property type="match status" value="1"/>
</dbReference>
<dbReference type="SUPFAM" id="SSF89562">
    <property type="entry name" value="RraA-like"/>
    <property type="match status" value="1"/>
</dbReference>
<accession>B3H2X0</accession>
<evidence type="ECO:0000255" key="1">
    <source>
        <dbReference type="HAMAP-Rule" id="MF_00471"/>
    </source>
</evidence>
<feature type="chain" id="PRO_1000125591" description="Regulator of ribonuclease activity A">
    <location>
        <begin position="1"/>
        <end position="165"/>
    </location>
</feature>
<keyword id="KW-0963">Cytoplasm</keyword>
<organism>
    <name type="scientific">Actinobacillus pleuropneumoniae serotype 7 (strain AP76)</name>
    <dbReference type="NCBI Taxonomy" id="537457"/>
    <lineage>
        <taxon>Bacteria</taxon>
        <taxon>Pseudomonadati</taxon>
        <taxon>Pseudomonadota</taxon>
        <taxon>Gammaproteobacteria</taxon>
        <taxon>Pasteurellales</taxon>
        <taxon>Pasteurellaceae</taxon>
        <taxon>Actinobacillus</taxon>
    </lineage>
</organism>
<gene>
    <name evidence="1" type="primary">rraA</name>
    <name type="ordered locus">APP7_1988</name>
</gene>
<protein>
    <recommendedName>
        <fullName evidence="1">Regulator of ribonuclease activity A</fullName>
    </recommendedName>
</protein>
<proteinExistence type="inferred from homology"/>
<comment type="function">
    <text evidence="1">Globally modulates RNA abundance by binding to RNase E (Rne) and regulating its endonucleolytic activity. Can modulate Rne action in a substrate-dependent manner by altering the composition of the degradosome. Modulates RNA-binding and helicase activities of the degradosome.</text>
</comment>
<comment type="subunit">
    <text evidence="1">Homotrimer. Binds to both RNA-binding sites in the C-terminal region of Rne and to RhlB.</text>
</comment>
<comment type="subcellular location">
    <subcellularLocation>
        <location evidence="1">Cytoplasm</location>
    </subcellularLocation>
</comment>
<comment type="similarity">
    <text evidence="1">Belongs to the RraA family.</text>
</comment>
<reference key="1">
    <citation type="submission" date="2008-06" db="EMBL/GenBank/DDBJ databases">
        <title>Genome and proteome analysis of A. pleuropneumoniae serotype 7.</title>
        <authorList>
            <person name="Linke B."/>
            <person name="Buettner F."/>
            <person name="Martinez-Arias R."/>
            <person name="Goesmann A."/>
            <person name="Baltes N."/>
            <person name="Tegetmeyer H."/>
            <person name="Singh M."/>
            <person name="Gerlach G.F."/>
        </authorList>
    </citation>
    <scope>NUCLEOTIDE SEQUENCE [LARGE SCALE GENOMIC DNA]</scope>
    <source>
        <strain>AP76</strain>
    </source>
</reference>